<accession>Q3KQ71</accession>
<sequence length="260" mass="29133">MSFKRDGDDSSQLNVLKKRRVADLLASYIPEDEALLLKNGSYACTVCHHRPVFNTIDMLSVHRTGKKHLGGLQRYYGKKLEHKNEIQKRRHFDFVRAEDAGEKPPPGPAPLLVQTKRITQNALLKSAPYNSCCSNKKVVANSRNVYDPHSGPSTTTGLNVPLDTQPGPSQPHTSLHSPPTGPCSSPTDEIPPNKNNSRHKKKGEEKFRKEIADPERERNMEHYLQLKSSGWIPDGTGKWVKDENVEFDSDEEEPPALPPS</sequence>
<name>SCNM1_XENLA</name>
<gene>
    <name type="primary">scnm1</name>
</gene>
<protein>
    <recommendedName>
        <fullName>Sodium channel modifier 1</fullName>
    </recommendedName>
</protein>
<reference key="1">
    <citation type="submission" date="2005-10" db="EMBL/GenBank/DDBJ databases">
        <authorList>
            <consortium name="NIH - Xenopus Gene Collection (XGC) project"/>
        </authorList>
    </citation>
    <scope>NUCLEOTIDE SEQUENCE [LARGE SCALE MRNA]</scope>
    <source>
        <tissue>Testis</tissue>
    </source>
</reference>
<organism>
    <name type="scientific">Xenopus laevis</name>
    <name type="common">African clawed frog</name>
    <dbReference type="NCBI Taxonomy" id="8355"/>
    <lineage>
        <taxon>Eukaryota</taxon>
        <taxon>Metazoa</taxon>
        <taxon>Chordata</taxon>
        <taxon>Craniata</taxon>
        <taxon>Vertebrata</taxon>
        <taxon>Euteleostomi</taxon>
        <taxon>Amphibia</taxon>
        <taxon>Batrachia</taxon>
        <taxon>Anura</taxon>
        <taxon>Pipoidea</taxon>
        <taxon>Pipidae</taxon>
        <taxon>Xenopodinae</taxon>
        <taxon>Xenopus</taxon>
        <taxon>Xenopus</taxon>
    </lineage>
</organism>
<comment type="function">
    <text evidence="2">As a component of the minor spliceosome, involved in the splicing of U12-type introns in pre-mRNAs.</text>
</comment>
<comment type="subunit">
    <text evidence="2">Component of the minor spliceosome, which splices U12-type introns.</text>
</comment>
<comment type="subcellular location">
    <subcellularLocation>
        <location evidence="1">Nucleus</location>
        <location evidence="1">Nucleoplasm</location>
    </subcellularLocation>
    <subcellularLocation>
        <location evidence="1">Nucleus speckle</location>
    </subcellularLocation>
</comment>
<feature type="chain" id="PRO_0000259638" description="Sodium channel modifier 1">
    <location>
        <begin position="1"/>
        <end position="260"/>
    </location>
</feature>
<feature type="zinc finger region" description="Matrin-type">
    <location>
        <begin position="42"/>
        <end position="74"/>
    </location>
</feature>
<feature type="region of interest" description="Disordered" evidence="4">
    <location>
        <begin position="143"/>
        <end position="260"/>
    </location>
</feature>
<feature type="short sequence motif" description="Bipartite nuclear localization signal" evidence="3">
    <location>
        <begin position="4"/>
        <end position="20"/>
    </location>
</feature>
<feature type="compositionally biased region" description="Polar residues" evidence="4">
    <location>
        <begin position="166"/>
        <end position="187"/>
    </location>
</feature>
<feature type="compositionally biased region" description="Basic and acidic residues" evidence="4">
    <location>
        <begin position="202"/>
        <end position="221"/>
    </location>
</feature>
<feature type="compositionally biased region" description="Acidic residues" evidence="4">
    <location>
        <begin position="245"/>
        <end position="254"/>
    </location>
</feature>
<evidence type="ECO:0000250" key="1">
    <source>
        <dbReference type="UniProtKB" id="Q8K136"/>
    </source>
</evidence>
<evidence type="ECO:0000250" key="2">
    <source>
        <dbReference type="UniProtKB" id="Q9BWG6"/>
    </source>
</evidence>
<evidence type="ECO:0000255" key="3"/>
<evidence type="ECO:0000256" key="4">
    <source>
        <dbReference type="SAM" id="MobiDB-lite"/>
    </source>
</evidence>
<proteinExistence type="evidence at transcript level"/>
<keyword id="KW-0479">Metal-binding</keyword>
<keyword id="KW-0507">mRNA processing</keyword>
<keyword id="KW-0508">mRNA splicing</keyword>
<keyword id="KW-0539">Nucleus</keyword>
<keyword id="KW-1185">Reference proteome</keyword>
<keyword id="KW-0747">Spliceosome</keyword>
<keyword id="KW-0862">Zinc</keyword>
<keyword id="KW-0863">Zinc-finger</keyword>
<dbReference type="EMBL" id="BC106358">
    <property type="protein sequence ID" value="AAI06359.1"/>
    <property type="molecule type" value="mRNA"/>
</dbReference>
<dbReference type="RefSeq" id="NP_001089700.1">
    <property type="nucleotide sequence ID" value="NM_001096231.1"/>
</dbReference>
<dbReference type="SMR" id="Q3KQ71"/>
<dbReference type="DNASU" id="734762"/>
<dbReference type="GeneID" id="734762"/>
<dbReference type="KEGG" id="xla:734762"/>
<dbReference type="AGR" id="Xenbase:XB-GENE-921398"/>
<dbReference type="CTD" id="734762"/>
<dbReference type="Xenbase" id="XB-GENE-921398">
    <property type="gene designation" value="scnm1.L"/>
</dbReference>
<dbReference type="OMA" id="NGKYACT"/>
<dbReference type="OrthoDB" id="1924550at2759"/>
<dbReference type="Proteomes" id="UP000186698">
    <property type="component" value="Chromosome 8L"/>
</dbReference>
<dbReference type="Bgee" id="734762">
    <property type="expression patterns" value="Expressed in testis and 19 other cell types or tissues"/>
</dbReference>
<dbReference type="GO" id="GO:0016607">
    <property type="term" value="C:nuclear speck"/>
    <property type="evidence" value="ECO:0000250"/>
    <property type="project" value="UniProtKB"/>
</dbReference>
<dbReference type="GO" id="GO:0005634">
    <property type="term" value="C:nucleus"/>
    <property type="evidence" value="ECO:0000318"/>
    <property type="project" value="GO_Central"/>
</dbReference>
<dbReference type="GO" id="GO:0005681">
    <property type="term" value="C:spliceosomal complex"/>
    <property type="evidence" value="ECO:0007669"/>
    <property type="project" value="UniProtKB-KW"/>
</dbReference>
<dbReference type="GO" id="GO:0008270">
    <property type="term" value="F:zinc ion binding"/>
    <property type="evidence" value="ECO:0007669"/>
    <property type="project" value="UniProtKB-KW"/>
</dbReference>
<dbReference type="GO" id="GO:0000380">
    <property type="term" value="P:alternative mRNA splicing, via spliceosome"/>
    <property type="evidence" value="ECO:0000250"/>
    <property type="project" value="UniProtKB"/>
</dbReference>
<dbReference type="GO" id="GO:0008380">
    <property type="term" value="P:RNA splicing"/>
    <property type="evidence" value="ECO:0000318"/>
    <property type="project" value="GO_Central"/>
</dbReference>
<dbReference type="InterPro" id="IPR033570">
    <property type="entry name" value="SCNM1"/>
</dbReference>
<dbReference type="InterPro" id="IPR031625">
    <property type="entry name" value="SCNM1_acidic"/>
</dbReference>
<dbReference type="InterPro" id="IPR031622">
    <property type="entry name" value="Znf-SCNM1"/>
</dbReference>
<dbReference type="PANTHER" id="PTHR32297">
    <property type="entry name" value="SODIUM CHANNEL MODIFIER 1"/>
    <property type="match status" value="1"/>
</dbReference>
<dbReference type="PANTHER" id="PTHR32297:SF1">
    <property type="entry name" value="SODIUM CHANNEL MODIFIER 1"/>
    <property type="match status" value="1"/>
</dbReference>
<dbReference type="Pfam" id="PF15805">
    <property type="entry name" value="SCNM1_acidic"/>
    <property type="match status" value="1"/>
</dbReference>
<dbReference type="Pfam" id="PF15803">
    <property type="entry name" value="zf-SCNM1"/>
    <property type="match status" value="1"/>
</dbReference>